<reference key="1">
    <citation type="journal article" date="2005" name="Genome Res.">
        <title>The Chlamydophila abortus genome sequence reveals an array of variable proteins that contribute to interspecies variation.</title>
        <authorList>
            <person name="Thomson N.R."/>
            <person name="Yeats C."/>
            <person name="Bell K."/>
            <person name="Holden M.T.G."/>
            <person name="Bentley S.D."/>
            <person name="Livingstone M."/>
            <person name="Cerdeno-Tarraga A.-M."/>
            <person name="Harris B."/>
            <person name="Doggett J."/>
            <person name="Ormond D."/>
            <person name="Mungall K."/>
            <person name="Clarke K."/>
            <person name="Feltwell T."/>
            <person name="Hance Z."/>
            <person name="Sanders M."/>
            <person name="Quail M.A."/>
            <person name="Price C."/>
            <person name="Barrell B.G."/>
            <person name="Parkhill J."/>
            <person name="Longbottom D."/>
        </authorList>
    </citation>
    <scope>NUCLEOTIDE SEQUENCE [LARGE SCALE GENOMIC DNA]</scope>
    <source>
        <strain>DSM 27085 / S26/3</strain>
    </source>
</reference>
<name>MUTS_CHLAB</name>
<gene>
    <name evidence="1" type="primary">mutS</name>
    <name type="ordered locus">CAB798</name>
</gene>
<keyword id="KW-0067">ATP-binding</keyword>
<keyword id="KW-0227">DNA damage</keyword>
<keyword id="KW-0234">DNA repair</keyword>
<keyword id="KW-0238">DNA-binding</keyword>
<keyword id="KW-0547">Nucleotide-binding</keyword>
<accession>Q5L554</accession>
<organism>
    <name type="scientific">Chlamydia abortus (strain DSM 27085 / S26/3)</name>
    <name type="common">Chlamydophila abortus</name>
    <dbReference type="NCBI Taxonomy" id="218497"/>
    <lineage>
        <taxon>Bacteria</taxon>
        <taxon>Pseudomonadati</taxon>
        <taxon>Chlamydiota</taxon>
        <taxon>Chlamydiia</taxon>
        <taxon>Chlamydiales</taxon>
        <taxon>Chlamydiaceae</taxon>
        <taxon>Chlamydia/Chlamydophila group</taxon>
        <taxon>Chlamydia</taxon>
    </lineage>
</organism>
<protein>
    <recommendedName>
        <fullName evidence="1">DNA mismatch repair protein MutS</fullName>
    </recommendedName>
</protein>
<sequence length="826" mass="92920">MTSKKTTPMMKQWHQCKEKAGESLLLFRMGDFYEAFYDDAIVLSQNLDITLTQRQGIPMSGIPVSTINGYIDRLVSKGFKVAVAEQLDEAQDNKGKSEPLSRELQRFITPGTLLSSSLLPEKANNYIVSINRVGALFGLACLDFSTGSFLLQEYDNMKDLVDEICRLAPTEILSCDKFYKKHADIIEQIQQHLKLTLSTYADWAFEHQFATQKLSLHFHVSSLDGFGLKGLVPAINSAGALLSYLQDKLLLPVEHISIPKTQGNQKHLLIDTASQVNLELLTPIHDPQGKSSLLHVMERTSTPMGGRLLRNTLVNPFYDQKEILLRQDAVEFLLDRSELRKNLKSLLSQVRDLERLTTKITTSLAGPKDIGMLRDSLNASIRVCEVLSPLPLPKFFQGRFTLPIGLTSLSELLSRALLGELPLRISEGNIFCDNHHPDLQRLRYTKEHSKEWLWQYQETIRQQTGVKKLKVCYSQALGYYIEVSSDFAPLLPKEFIRRQSRLHAERFTTEKLQEFQDDMLNISDKLQTLETQLFKDLCAQILQQREEILSLSQVIADIDYILSLSDLAAEYNYCRPIVDTSDSLSISGGIHPVAQTLLDKGTFIPNDIKMHSTRTRMILITGPNMAGKSTYIRQIALLVIMAQMGSFIPAKSAHIGMIDKIFTRIGAGDNLSKGMSTFMVEMAETANILHNATDRSLVILDEVGRGTSTYDGLAIAQSVVEYLLFTEGKKAKTLFATHYKELTDLENHCPHVENFHASVKENGGQPVFLYEILKGHSQKSFGIHVAKLAGFPLCVISRAQQILRQLEGPEATSKQPQEKELQLTLF</sequence>
<comment type="function">
    <text evidence="1">This protein is involved in the repair of mismatches in DNA. It is possible that it carries out the mismatch recognition step. This protein has a weak ATPase activity.</text>
</comment>
<comment type="similarity">
    <text evidence="1">Belongs to the DNA mismatch repair MutS family.</text>
</comment>
<proteinExistence type="inferred from homology"/>
<evidence type="ECO:0000255" key="1">
    <source>
        <dbReference type="HAMAP-Rule" id="MF_00096"/>
    </source>
</evidence>
<dbReference type="EMBL" id="CR848038">
    <property type="protein sequence ID" value="CAH64240.1"/>
    <property type="molecule type" value="Genomic_DNA"/>
</dbReference>
<dbReference type="RefSeq" id="WP_011097337.1">
    <property type="nucleotide sequence ID" value="NC_004552.2"/>
</dbReference>
<dbReference type="SMR" id="Q5L554"/>
<dbReference type="KEGG" id="cab:CAB798"/>
<dbReference type="eggNOG" id="COG0249">
    <property type="taxonomic scope" value="Bacteria"/>
</dbReference>
<dbReference type="HOGENOM" id="CLU_002472_3_1_0"/>
<dbReference type="OrthoDB" id="9802448at2"/>
<dbReference type="Proteomes" id="UP000001012">
    <property type="component" value="Chromosome"/>
</dbReference>
<dbReference type="GO" id="GO:0005829">
    <property type="term" value="C:cytosol"/>
    <property type="evidence" value="ECO:0007669"/>
    <property type="project" value="TreeGrafter"/>
</dbReference>
<dbReference type="GO" id="GO:0005524">
    <property type="term" value="F:ATP binding"/>
    <property type="evidence" value="ECO:0007669"/>
    <property type="project" value="UniProtKB-UniRule"/>
</dbReference>
<dbReference type="GO" id="GO:0140664">
    <property type="term" value="F:ATP-dependent DNA damage sensor activity"/>
    <property type="evidence" value="ECO:0007669"/>
    <property type="project" value="InterPro"/>
</dbReference>
<dbReference type="GO" id="GO:0003684">
    <property type="term" value="F:damaged DNA binding"/>
    <property type="evidence" value="ECO:0007669"/>
    <property type="project" value="UniProtKB-UniRule"/>
</dbReference>
<dbReference type="GO" id="GO:0030983">
    <property type="term" value="F:mismatched DNA binding"/>
    <property type="evidence" value="ECO:0007669"/>
    <property type="project" value="InterPro"/>
</dbReference>
<dbReference type="GO" id="GO:0006298">
    <property type="term" value="P:mismatch repair"/>
    <property type="evidence" value="ECO:0007669"/>
    <property type="project" value="UniProtKB-UniRule"/>
</dbReference>
<dbReference type="CDD" id="cd03284">
    <property type="entry name" value="ABC_MutS1"/>
    <property type="match status" value="1"/>
</dbReference>
<dbReference type="FunFam" id="3.40.50.300:FF:002842">
    <property type="entry name" value="DNA mismatch repair protein MutS"/>
    <property type="match status" value="1"/>
</dbReference>
<dbReference type="Gene3D" id="1.10.1420.10">
    <property type="match status" value="2"/>
</dbReference>
<dbReference type="Gene3D" id="3.40.1170.10">
    <property type="entry name" value="DNA repair protein MutS, domain I"/>
    <property type="match status" value="1"/>
</dbReference>
<dbReference type="Gene3D" id="3.30.420.110">
    <property type="entry name" value="MutS, connector domain"/>
    <property type="match status" value="1"/>
</dbReference>
<dbReference type="Gene3D" id="3.40.50.300">
    <property type="entry name" value="P-loop containing nucleotide triphosphate hydrolases"/>
    <property type="match status" value="1"/>
</dbReference>
<dbReference type="HAMAP" id="MF_00096">
    <property type="entry name" value="MutS"/>
    <property type="match status" value="1"/>
</dbReference>
<dbReference type="InterPro" id="IPR005748">
    <property type="entry name" value="DNA_mismatch_repair_MutS"/>
</dbReference>
<dbReference type="InterPro" id="IPR007695">
    <property type="entry name" value="DNA_mismatch_repair_MutS-lik_N"/>
</dbReference>
<dbReference type="InterPro" id="IPR017261">
    <property type="entry name" value="DNA_mismatch_repair_MutS/MSH"/>
</dbReference>
<dbReference type="InterPro" id="IPR000432">
    <property type="entry name" value="DNA_mismatch_repair_MutS_C"/>
</dbReference>
<dbReference type="InterPro" id="IPR007861">
    <property type="entry name" value="DNA_mismatch_repair_MutS_clamp"/>
</dbReference>
<dbReference type="InterPro" id="IPR007696">
    <property type="entry name" value="DNA_mismatch_repair_MutS_core"/>
</dbReference>
<dbReference type="InterPro" id="IPR016151">
    <property type="entry name" value="DNA_mismatch_repair_MutS_N"/>
</dbReference>
<dbReference type="InterPro" id="IPR036187">
    <property type="entry name" value="DNA_mismatch_repair_MutS_sf"/>
</dbReference>
<dbReference type="InterPro" id="IPR007860">
    <property type="entry name" value="DNA_mmatch_repair_MutS_con_dom"/>
</dbReference>
<dbReference type="InterPro" id="IPR045076">
    <property type="entry name" value="MutS"/>
</dbReference>
<dbReference type="InterPro" id="IPR036678">
    <property type="entry name" value="MutS_con_dom_sf"/>
</dbReference>
<dbReference type="InterPro" id="IPR027417">
    <property type="entry name" value="P-loop_NTPase"/>
</dbReference>
<dbReference type="NCBIfam" id="TIGR01070">
    <property type="entry name" value="mutS1"/>
    <property type="match status" value="1"/>
</dbReference>
<dbReference type="NCBIfam" id="NF003810">
    <property type="entry name" value="PRK05399.1"/>
    <property type="match status" value="1"/>
</dbReference>
<dbReference type="PANTHER" id="PTHR11361:SF34">
    <property type="entry name" value="DNA MISMATCH REPAIR PROTEIN MSH1, MITOCHONDRIAL"/>
    <property type="match status" value="1"/>
</dbReference>
<dbReference type="PANTHER" id="PTHR11361">
    <property type="entry name" value="DNA MISMATCH REPAIR PROTEIN MUTS FAMILY MEMBER"/>
    <property type="match status" value="1"/>
</dbReference>
<dbReference type="Pfam" id="PF01624">
    <property type="entry name" value="MutS_I"/>
    <property type="match status" value="1"/>
</dbReference>
<dbReference type="Pfam" id="PF05188">
    <property type="entry name" value="MutS_II"/>
    <property type="match status" value="1"/>
</dbReference>
<dbReference type="Pfam" id="PF05192">
    <property type="entry name" value="MutS_III"/>
    <property type="match status" value="1"/>
</dbReference>
<dbReference type="Pfam" id="PF05190">
    <property type="entry name" value="MutS_IV"/>
    <property type="match status" value="1"/>
</dbReference>
<dbReference type="Pfam" id="PF00488">
    <property type="entry name" value="MutS_V"/>
    <property type="match status" value="1"/>
</dbReference>
<dbReference type="PIRSF" id="PIRSF037677">
    <property type="entry name" value="DNA_mis_repair_Msh6"/>
    <property type="match status" value="1"/>
</dbReference>
<dbReference type="SMART" id="SM00534">
    <property type="entry name" value="MUTSac"/>
    <property type="match status" value="1"/>
</dbReference>
<dbReference type="SMART" id="SM00533">
    <property type="entry name" value="MUTSd"/>
    <property type="match status" value="1"/>
</dbReference>
<dbReference type="SUPFAM" id="SSF55271">
    <property type="entry name" value="DNA repair protein MutS, domain I"/>
    <property type="match status" value="1"/>
</dbReference>
<dbReference type="SUPFAM" id="SSF53150">
    <property type="entry name" value="DNA repair protein MutS, domain II"/>
    <property type="match status" value="1"/>
</dbReference>
<dbReference type="SUPFAM" id="SSF48334">
    <property type="entry name" value="DNA repair protein MutS, domain III"/>
    <property type="match status" value="1"/>
</dbReference>
<dbReference type="SUPFAM" id="SSF52540">
    <property type="entry name" value="P-loop containing nucleoside triphosphate hydrolases"/>
    <property type="match status" value="1"/>
</dbReference>
<dbReference type="PROSITE" id="PS00486">
    <property type="entry name" value="DNA_MISMATCH_REPAIR_2"/>
    <property type="match status" value="1"/>
</dbReference>
<feature type="chain" id="PRO_0000224361" description="DNA mismatch repair protein MutS">
    <location>
        <begin position="1"/>
        <end position="826"/>
    </location>
</feature>
<feature type="binding site" evidence="1">
    <location>
        <begin position="622"/>
        <end position="629"/>
    </location>
    <ligand>
        <name>ATP</name>
        <dbReference type="ChEBI" id="CHEBI:30616"/>
    </ligand>
</feature>